<feature type="chain" id="PRO_0000085177" description="Flavonol 3-sulfotransferase">
    <location>
        <begin position="1"/>
        <end position="312"/>
    </location>
</feature>
<feature type="active site" description="Proton acceptor" evidence="1">
    <location>
        <position position="119"/>
    </location>
</feature>
<feature type="binding site" evidence="1">
    <location>
        <begin position="59"/>
        <end position="64"/>
    </location>
    <ligand>
        <name>3'-phosphoadenylyl sulfate</name>
        <dbReference type="ChEBI" id="CHEBI:58339"/>
    </ligand>
</feature>
<feature type="binding site" evidence="1">
    <location>
        <position position="141"/>
    </location>
    <ligand>
        <name>3'-phosphoadenylyl sulfate</name>
        <dbReference type="ChEBI" id="CHEBI:58339"/>
    </ligand>
</feature>
<feature type="binding site" evidence="1">
    <location>
        <position position="149"/>
    </location>
    <ligand>
        <name>3'-phosphoadenylyl sulfate</name>
        <dbReference type="ChEBI" id="CHEBI:58339"/>
    </ligand>
</feature>
<feature type="binding site" evidence="1">
    <location>
        <position position="207"/>
    </location>
    <ligand>
        <name>3'-phosphoadenylyl sulfate</name>
        <dbReference type="ChEBI" id="CHEBI:58339"/>
    </ligand>
</feature>
<feature type="binding site" evidence="1">
    <location>
        <begin position="277"/>
        <end position="279"/>
    </location>
    <ligand>
        <name>3'-phosphoadenylyl sulfate</name>
        <dbReference type="ChEBI" id="CHEBI:58339"/>
    </ligand>
</feature>
<evidence type="ECO:0000250" key="1"/>
<evidence type="ECO:0000305" key="2"/>
<organism>
    <name type="scientific">Flaveria bidentis</name>
    <name type="common">Coastal plain yellowtops</name>
    <name type="synonym">Ethulia bidentis</name>
    <dbReference type="NCBI Taxonomy" id="4224"/>
    <lineage>
        <taxon>Eukaryota</taxon>
        <taxon>Viridiplantae</taxon>
        <taxon>Streptophyta</taxon>
        <taxon>Embryophyta</taxon>
        <taxon>Tracheophyta</taxon>
        <taxon>Spermatophyta</taxon>
        <taxon>Magnoliopsida</taxon>
        <taxon>eudicotyledons</taxon>
        <taxon>Gunneridae</taxon>
        <taxon>Pentapetalae</taxon>
        <taxon>asterids</taxon>
        <taxon>campanulids</taxon>
        <taxon>Asterales</taxon>
        <taxon>Asteraceae</taxon>
        <taxon>Asteroideae</taxon>
        <taxon>Heliantheae alliance</taxon>
        <taxon>Tageteae</taxon>
        <taxon>Flaveria</taxon>
    </lineage>
</organism>
<dbReference type="EC" id="2.8.2.-"/>
<dbReference type="EMBL" id="U10275">
    <property type="protein sequence ID" value="AAA61638.1"/>
    <property type="molecule type" value="mRNA"/>
</dbReference>
<dbReference type="SMR" id="P52835"/>
<dbReference type="KEGG" id="ag:AAA61638"/>
<dbReference type="GO" id="GO:0005737">
    <property type="term" value="C:cytoplasm"/>
    <property type="evidence" value="ECO:0007669"/>
    <property type="project" value="UniProtKB-SubCell"/>
</dbReference>
<dbReference type="GO" id="GO:0008146">
    <property type="term" value="F:sulfotransferase activity"/>
    <property type="evidence" value="ECO:0007669"/>
    <property type="project" value="InterPro"/>
</dbReference>
<dbReference type="Gene3D" id="3.40.50.300">
    <property type="entry name" value="P-loop containing nucleotide triphosphate hydrolases"/>
    <property type="match status" value="1"/>
</dbReference>
<dbReference type="InterPro" id="IPR027417">
    <property type="entry name" value="P-loop_NTPase"/>
</dbReference>
<dbReference type="InterPro" id="IPR000863">
    <property type="entry name" value="Sulfotransferase_dom"/>
</dbReference>
<dbReference type="PANTHER" id="PTHR11783">
    <property type="entry name" value="SULFOTRANSFERASE SULT"/>
    <property type="match status" value="1"/>
</dbReference>
<dbReference type="Pfam" id="PF00685">
    <property type="entry name" value="Sulfotransfer_1"/>
    <property type="match status" value="1"/>
</dbReference>
<dbReference type="SUPFAM" id="SSF52540">
    <property type="entry name" value="P-loop containing nucleoside triphosphate hydrolases"/>
    <property type="match status" value="1"/>
</dbReference>
<accession>P52835</accession>
<protein>
    <recommendedName>
        <fullName>Flavonol 3-sulfotransferase</fullName>
        <shortName>F3-ST</shortName>
        <ecNumber>2.8.2.-</ecNumber>
    </recommendedName>
</protein>
<proteinExistence type="evidence at transcript level"/>
<sequence length="312" mass="36457">MEDIIKTLPQHTCSFLKQRFTLYKYQDVWNHQEFLEGRMLSEQTFKAHPNDVFLASYPKSGTTWLKALAFAIITREKFDDSTSPLLTTMPHDCIPLLEKDLEKIQENQRNSLYTPISTHFHYKSLPESARTSNCKIVYIYRNMKDVIVSYYHFLRQIVKLSVEEAPFEEAVDEFCQGISSCGPYWEHILGYWKASLEKPEIFLFLKYEDMKKDPVPSVKKLADFIGHPFTPKEEEAGVIENIIKLCSFEKLSSLEVNKSGMHRPEEAHSIENRLYFRKGKDGDWKNYFTDEMIEKIDKLIDEKLGATGLVLK</sequence>
<comment type="function">
    <text>Sulfotransferase that utilizes 3'-phospho-5'-adenylyl sulfate (PAPS) as sulfonate donor to catalyze the sulfate conjugation of quercetin, rhamnetin and isorhamnetin but not kaempferol. O-sulfation of position 3 of flavonol. May play a role in auxin transport.</text>
</comment>
<comment type="subcellular location">
    <subcellularLocation>
        <location>Cytoplasm</location>
    </subcellularLocation>
</comment>
<comment type="tissue specificity">
    <text>Highest in shoot tips and lowest in mature leaves and roots.</text>
</comment>
<comment type="similarity">
    <text evidence="2">Belongs to the sulfotransferase 1 family.</text>
</comment>
<reference key="1">
    <citation type="journal article" date="1994" name="Plant Physiol.">
        <title>Cloning and regulation of flavonol 3-sulfotransferase in cell-suspension cultures of Flaveria bidentis.</title>
        <authorList>
            <person name="Ananvoranich S."/>
            <person name="Varin L."/>
            <person name="Gulick P."/>
            <person name="Ibrahim R."/>
        </authorList>
    </citation>
    <scope>NUCLEOTIDE SEQUENCE [MRNA]</scope>
</reference>
<name>F3ST_FLABI</name>
<keyword id="KW-0963">Cytoplasm</keyword>
<keyword id="KW-0808">Transferase</keyword>